<proteinExistence type="inferred from homology"/>
<name>Y123_RICCN</name>
<keyword id="KW-0732">Signal</keyword>
<sequence>MRILIILSIILCSLSIRADLEYVDNEIYNYNGGSNENGCVEVYDPYEKFNRKVFVFNSVLDYIILRPLAVGYKNITNDYVKARVNSFVSNVDTPLTAINYGLQLNYDKTMKSVWRFLINTTLGIGGLFDVAGKVGLPSDRQTFGSTLAHYGVAPGPYLVLPIIGSTNARDMTDSVITNYALNPLMYYTHNDFDLGVLAVSKINDRYVVLPFSDYVMKNSTDPYVAIRSALHRVREASVQYPENFKCPKPKN</sequence>
<gene>
    <name type="ordered locus">RC0123</name>
</gene>
<reference key="1">
    <citation type="journal article" date="2001" name="Science">
        <title>Mechanisms of evolution in Rickettsia conorii and R. prowazekii.</title>
        <authorList>
            <person name="Ogata H."/>
            <person name="Audic S."/>
            <person name="Renesto-Audiffren P."/>
            <person name="Fournier P.-E."/>
            <person name="Barbe V."/>
            <person name="Samson D."/>
            <person name="Roux V."/>
            <person name="Cossart P."/>
            <person name="Weissenbach J."/>
            <person name="Claverie J.-M."/>
            <person name="Raoult D."/>
        </authorList>
    </citation>
    <scope>NUCLEOTIDE SEQUENCE [LARGE SCALE GENOMIC DNA]</scope>
    <source>
        <strain>ATCC VR-613 / Malish 7</strain>
    </source>
</reference>
<feature type="signal peptide" evidence="1">
    <location>
        <begin position="1"/>
        <end position="18"/>
    </location>
</feature>
<feature type="chain" id="PRO_0000263035" description="Uncharacterized protein RC0123">
    <location>
        <begin position="19"/>
        <end position="251"/>
    </location>
</feature>
<comment type="similarity">
    <text evidence="2">Belongs to the MlaA family.</text>
</comment>
<comment type="sequence caution" evidence="2">
    <conflict type="erroneous initiation">
        <sequence resource="EMBL-CDS" id="AAL02661"/>
    </conflict>
</comment>
<evidence type="ECO:0000255" key="1"/>
<evidence type="ECO:0000305" key="2"/>
<dbReference type="EMBL" id="AE006914">
    <property type="protein sequence ID" value="AAL02661.1"/>
    <property type="status" value="ALT_INIT"/>
    <property type="molecule type" value="Genomic_DNA"/>
</dbReference>
<dbReference type="PIR" id="C97715">
    <property type="entry name" value="C97715"/>
</dbReference>
<dbReference type="RefSeq" id="WP_029374425.1">
    <property type="nucleotide sequence ID" value="NC_003103.1"/>
</dbReference>
<dbReference type="SMR" id="Q92JE4"/>
<dbReference type="GeneID" id="928072"/>
<dbReference type="KEGG" id="rco:RC0123"/>
<dbReference type="PATRIC" id="fig|272944.4.peg.145"/>
<dbReference type="HOGENOM" id="CLU_059326_2_2_5"/>
<dbReference type="Proteomes" id="UP000000816">
    <property type="component" value="Chromosome"/>
</dbReference>
<dbReference type="GO" id="GO:0016020">
    <property type="term" value="C:membrane"/>
    <property type="evidence" value="ECO:0007669"/>
    <property type="project" value="InterPro"/>
</dbReference>
<dbReference type="GO" id="GO:0120010">
    <property type="term" value="P:intermembrane phospholipid transfer"/>
    <property type="evidence" value="ECO:0007669"/>
    <property type="project" value="TreeGrafter"/>
</dbReference>
<dbReference type="InterPro" id="IPR007428">
    <property type="entry name" value="MlaA"/>
</dbReference>
<dbReference type="PANTHER" id="PTHR30035:SF3">
    <property type="entry name" value="INTERMEMBRANE PHOSPHOLIPID TRANSPORT SYSTEM LIPOPROTEIN MLAA"/>
    <property type="match status" value="1"/>
</dbReference>
<dbReference type="PANTHER" id="PTHR30035">
    <property type="entry name" value="LIPOPROTEIN VACJ-RELATED"/>
    <property type="match status" value="1"/>
</dbReference>
<dbReference type="Pfam" id="PF04333">
    <property type="entry name" value="MlaA"/>
    <property type="match status" value="1"/>
</dbReference>
<dbReference type="PRINTS" id="PR01805">
    <property type="entry name" value="VACJLIPOPROT"/>
</dbReference>
<accession>Q92JE4</accession>
<organism>
    <name type="scientific">Rickettsia conorii (strain ATCC VR-613 / Malish 7)</name>
    <dbReference type="NCBI Taxonomy" id="272944"/>
    <lineage>
        <taxon>Bacteria</taxon>
        <taxon>Pseudomonadati</taxon>
        <taxon>Pseudomonadota</taxon>
        <taxon>Alphaproteobacteria</taxon>
        <taxon>Rickettsiales</taxon>
        <taxon>Rickettsiaceae</taxon>
        <taxon>Rickettsieae</taxon>
        <taxon>Rickettsia</taxon>
        <taxon>spotted fever group</taxon>
    </lineage>
</organism>
<protein>
    <recommendedName>
        <fullName>Uncharacterized protein RC0123</fullName>
    </recommendedName>
</protein>